<organism>
    <name type="scientific">Macaca fascicularis</name>
    <name type="common">Crab-eating macaque</name>
    <name type="synonym">Cynomolgus monkey</name>
    <dbReference type="NCBI Taxonomy" id="9541"/>
    <lineage>
        <taxon>Eukaryota</taxon>
        <taxon>Metazoa</taxon>
        <taxon>Chordata</taxon>
        <taxon>Craniata</taxon>
        <taxon>Vertebrata</taxon>
        <taxon>Euteleostomi</taxon>
        <taxon>Mammalia</taxon>
        <taxon>Eutheria</taxon>
        <taxon>Euarchontoglires</taxon>
        <taxon>Primates</taxon>
        <taxon>Haplorrhini</taxon>
        <taxon>Catarrhini</taxon>
        <taxon>Cercopithecidae</taxon>
        <taxon>Cercopithecinae</taxon>
        <taxon>Macaca</taxon>
    </lineage>
</organism>
<protein>
    <recommendedName>
        <fullName>Interleukin-2 receptor subunit beta</fullName>
        <shortName>IL-2 receptor subunit beta</shortName>
        <shortName>IL-2R subunit beta</shortName>
        <shortName>IL-2RB</shortName>
    </recommendedName>
    <alternativeName>
        <fullName>High affinity IL-2 receptor subunit beta</fullName>
    </alternativeName>
    <alternativeName>
        <fullName>p70-75</fullName>
    </alternativeName>
    <cdAntigenName>CD122</cdAntigenName>
</protein>
<keyword id="KW-1003">Cell membrane</keyword>
<keyword id="KW-1015">Disulfide bond</keyword>
<keyword id="KW-0325">Glycoprotein</keyword>
<keyword id="KW-0472">Membrane</keyword>
<keyword id="KW-0675">Receptor</keyword>
<keyword id="KW-1185">Reference proteome</keyword>
<keyword id="KW-0732">Signal</keyword>
<keyword id="KW-0812">Transmembrane</keyword>
<keyword id="KW-1133">Transmembrane helix</keyword>
<comment type="function">
    <text evidence="2">Receptor for interleukin-2. This beta subunit is involved in receptor mediated endocytosis and transduces the mitogenic signals of IL2. Probably in association with IL15RA, involved in the stimulation of neutrophil phagocytosis by IL15 (By similarity).</text>
</comment>
<comment type="subunit">
    <text evidence="2">Non-covalent dimer of an alpha and a beta subunit. IL2R exists in 3 different forms: a high affinity dimer, an intermediate affinity monomer (beta subunit), and a low affinity monomer (alpha subunit). The high and intermediate affinity forms also associate with a gamma subunit. Interacts with SHB upon interleukin stimulation (By similarity).</text>
</comment>
<comment type="subcellular location">
    <subcellularLocation>
        <location evidence="2">Cell membrane</location>
        <topology evidence="3">Single-pass type I membrane protein</topology>
    </subcellularLocation>
    <subcellularLocation>
        <location evidence="2">Cell surface</location>
    </subcellularLocation>
</comment>
<comment type="domain">
    <text evidence="1">The WSXWS motif appears to be necessary for proper protein folding and thereby efficient intracellular transport and cell-surface receptor binding.</text>
</comment>
<comment type="domain">
    <text evidence="1">The box 1 motif is required for JAK interaction and/or activation.</text>
</comment>
<comment type="similarity">
    <text evidence="6">Belongs to the type I cytokine receptor family. Type 4 subfamily.</text>
</comment>
<name>IL2RB_MACFA</name>
<dbReference type="EMBL" id="DQ223724">
    <property type="protein sequence ID" value="ABB03908.1"/>
    <property type="molecule type" value="mRNA"/>
</dbReference>
<dbReference type="RefSeq" id="NP_001274237.1">
    <property type="nucleotide sequence ID" value="NM_001287308.1"/>
</dbReference>
<dbReference type="RefSeq" id="XP_005567439.1">
    <property type="nucleotide sequence ID" value="XM_005567382.2"/>
</dbReference>
<dbReference type="SMR" id="Q38J85"/>
<dbReference type="STRING" id="9541.ENSMFAP00000005839"/>
<dbReference type="GlyCosmos" id="Q38J85">
    <property type="glycosylation" value="4 sites, No reported glycans"/>
</dbReference>
<dbReference type="GeneID" id="102138714"/>
<dbReference type="KEGG" id="mcf:102138714"/>
<dbReference type="CTD" id="3560"/>
<dbReference type="VEuPathDB" id="HostDB:ENSMFAG00000002576"/>
<dbReference type="eggNOG" id="ENOG502S0MR">
    <property type="taxonomic scope" value="Eukaryota"/>
</dbReference>
<dbReference type="OMA" id="QTSCFTN"/>
<dbReference type="OrthoDB" id="13099at314294"/>
<dbReference type="Proteomes" id="UP000233100">
    <property type="component" value="Chromosome 10"/>
</dbReference>
<dbReference type="GO" id="GO:0009986">
    <property type="term" value="C:cell surface"/>
    <property type="evidence" value="ECO:0000250"/>
    <property type="project" value="UniProtKB"/>
</dbReference>
<dbReference type="GO" id="GO:0009897">
    <property type="term" value="C:external side of plasma membrane"/>
    <property type="evidence" value="ECO:0007669"/>
    <property type="project" value="TreeGrafter"/>
</dbReference>
<dbReference type="GO" id="GO:0005886">
    <property type="term" value="C:plasma membrane"/>
    <property type="evidence" value="ECO:0000250"/>
    <property type="project" value="UniProtKB"/>
</dbReference>
<dbReference type="GO" id="GO:0042010">
    <property type="term" value="F:interleukin-15 receptor activity"/>
    <property type="evidence" value="ECO:0000250"/>
    <property type="project" value="UniProtKB"/>
</dbReference>
<dbReference type="GO" id="GO:0019976">
    <property type="term" value="F:interleukin-2 binding"/>
    <property type="evidence" value="ECO:0000250"/>
    <property type="project" value="UniProtKB"/>
</dbReference>
<dbReference type="GO" id="GO:0004911">
    <property type="term" value="F:interleukin-2 receptor activity"/>
    <property type="evidence" value="ECO:0000250"/>
    <property type="project" value="UniProtKB"/>
</dbReference>
<dbReference type="GO" id="GO:0016064">
    <property type="term" value="P:immunoglobulin mediated immune response"/>
    <property type="evidence" value="ECO:0007669"/>
    <property type="project" value="TreeGrafter"/>
</dbReference>
<dbReference type="GO" id="GO:0035723">
    <property type="term" value="P:interleukin-15-mediated signaling pathway"/>
    <property type="evidence" value="ECO:0000250"/>
    <property type="project" value="UniProtKB"/>
</dbReference>
<dbReference type="GO" id="GO:0038110">
    <property type="term" value="P:interleukin-2-mediated signaling pathway"/>
    <property type="evidence" value="ECO:0000250"/>
    <property type="project" value="UniProtKB"/>
</dbReference>
<dbReference type="GO" id="GO:0050766">
    <property type="term" value="P:positive regulation of phagocytosis"/>
    <property type="evidence" value="ECO:0000250"/>
    <property type="project" value="UniProtKB"/>
</dbReference>
<dbReference type="CDD" id="cd00063">
    <property type="entry name" value="FN3"/>
    <property type="match status" value="1"/>
</dbReference>
<dbReference type="FunFam" id="2.60.40.10:FF:001769">
    <property type="entry name" value="Interleukin-2 receptor subunit beta"/>
    <property type="match status" value="1"/>
</dbReference>
<dbReference type="FunFam" id="2.60.40.10:FF:001830">
    <property type="entry name" value="Interleukin-2 receptor subunit beta"/>
    <property type="match status" value="1"/>
</dbReference>
<dbReference type="Gene3D" id="2.60.40.10">
    <property type="entry name" value="Immunoglobulins"/>
    <property type="match status" value="2"/>
</dbReference>
<dbReference type="InterPro" id="IPR003961">
    <property type="entry name" value="FN3_dom"/>
</dbReference>
<dbReference type="InterPro" id="IPR036116">
    <property type="entry name" value="FN3_sf"/>
</dbReference>
<dbReference type="InterPro" id="IPR003531">
    <property type="entry name" value="Hempt_rcpt_S_F1_CS"/>
</dbReference>
<dbReference type="InterPro" id="IPR013783">
    <property type="entry name" value="Ig-like_fold"/>
</dbReference>
<dbReference type="InterPro" id="IPR040951">
    <property type="entry name" value="IL2RB_N1"/>
</dbReference>
<dbReference type="PANTHER" id="PTHR23037">
    <property type="entry name" value="CYTOKINE RECEPTOR"/>
    <property type="match status" value="1"/>
</dbReference>
<dbReference type="PANTHER" id="PTHR23037:SF30">
    <property type="entry name" value="INTERLEUKIN-2 RECEPTOR SUBUNIT BETA"/>
    <property type="match status" value="1"/>
</dbReference>
<dbReference type="Pfam" id="PF18707">
    <property type="entry name" value="IL2RB_N1"/>
    <property type="match status" value="1"/>
</dbReference>
<dbReference type="SMART" id="SM00060">
    <property type="entry name" value="FN3"/>
    <property type="match status" value="1"/>
</dbReference>
<dbReference type="SUPFAM" id="SSF49265">
    <property type="entry name" value="Fibronectin type III"/>
    <property type="match status" value="2"/>
</dbReference>
<dbReference type="PROSITE" id="PS50853">
    <property type="entry name" value="FN3"/>
    <property type="match status" value="1"/>
</dbReference>
<dbReference type="PROSITE" id="PS01355">
    <property type="entry name" value="HEMATOPO_REC_S_F1"/>
    <property type="match status" value="1"/>
</dbReference>
<proteinExistence type="evidence at transcript level"/>
<evidence type="ECO:0000250" key="1"/>
<evidence type="ECO:0000250" key="2">
    <source>
        <dbReference type="UniProtKB" id="P14784"/>
    </source>
</evidence>
<evidence type="ECO:0000255" key="3"/>
<evidence type="ECO:0000255" key="4">
    <source>
        <dbReference type="PROSITE-ProRule" id="PRU00316"/>
    </source>
</evidence>
<evidence type="ECO:0000256" key="5">
    <source>
        <dbReference type="SAM" id="MobiDB-lite"/>
    </source>
</evidence>
<evidence type="ECO:0000305" key="6"/>
<feature type="signal peptide" evidence="1">
    <location>
        <begin position="1"/>
        <end position="26"/>
    </location>
</feature>
<feature type="chain" id="PRO_0000045409" description="Interleukin-2 receptor subunit beta">
    <location>
        <begin position="27"/>
        <end position="551"/>
    </location>
</feature>
<feature type="topological domain" description="Extracellular" evidence="3">
    <location>
        <begin position="27"/>
        <end position="240"/>
    </location>
</feature>
<feature type="transmembrane region" description="Helical" evidence="3">
    <location>
        <begin position="241"/>
        <end position="265"/>
    </location>
</feature>
<feature type="topological domain" description="Cytoplasmic" evidence="3">
    <location>
        <begin position="266"/>
        <end position="551"/>
    </location>
</feature>
<feature type="domain" description="Fibronectin type-III" evidence="4">
    <location>
        <begin position="134"/>
        <end position="234"/>
    </location>
</feature>
<feature type="region of interest" description="Disordered" evidence="5">
    <location>
        <begin position="389"/>
        <end position="417"/>
    </location>
</feature>
<feature type="region of interest" description="Disordered" evidence="5">
    <location>
        <begin position="430"/>
        <end position="484"/>
    </location>
</feature>
<feature type="region of interest" description="Disordered" evidence="5">
    <location>
        <begin position="496"/>
        <end position="517"/>
    </location>
</feature>
<feature type="short sequence motif" description="WSXWS motif">
    <location>
        <begin position="220"/>
        <end position="224"/>
    </location>
</feature>
<feature type="short sequence motif" description="Box 1 motif">
    <location>
        <begin position="278"/>
        <end position="286"/>
    </location>
</feature>
<feature type="glycosylation site" description="N-linked (GlcNAc...) asparagine" evidence="3">
    <location>
        <position position="29"/>
    </location>
</feature>
<feature type="glycosylation site" description="N-linked (GlcNAc...) asparagine" evidence="3">
    <location>
        <position position="43"/>
    </location>
</feature>
<feature type="glycosylation site" description="N-linked (GlcNAc...) asparagine" evidence="3">
    <location>
        <position position="71"/>
    </location>
</feature>
<feature type="glycosylation site" description="N-linked (GlcNAc...) asparagine" evidence="3">
    <location>
        <position position="149"/>
    </location>
</feature>
<feature type="disulfide bond" evidence="1">
    <location>
        <begin position="36"/>
        <end position="46"/>
    </location>
</feature>
<feature type="disulfide bond" evidence="1">
    <location>
        <begin position="74"/>
        <end position="86"/>
    </location>
</feature>
<sequence>MATLALSWCLPLLILLLPLATSSASAAVNGTSRFTCFYNSRANISCVWSQDGALQDTSCQVHAWPDRRRWNQTCELLPVSQASWACNLILGTPDSQKLTAVDIVTLRVMCREGVRWRMMAIQDFKPFENLRLMAPISLQVVHVETHRCNISWKISQASHYFERHLEFEARTLSPGHTWEEAPLMTLKQKQEWICLETLTPDTQYEFQVRVKPLQGEFTTWSPWSQPLAFRTKPAALGKDTIPWLGHLLVGLSGAFGFIILVYLLINCRNTGPWLKKVLKCHTPDPSKFFSQLTSEHGGDVQKWLSSPFPSSSFSPGGLAPEISPLEVLERDKVTQLLLQQDKVPEPSSLSSNRSLTSCFTNQGYFFFHLPDALEIEACQVYFTYDPCAEEEPDEGGADAPTGSSPQPLRPLSAEDDAYCTFPSGDDLLLFSPSLLGGPSPPSTAPGGSGAGEERLPPSLQERVPRDWDPQPLGPPTPGVPDLVDFQPRPELVLREAGEQVPDPGPREPFSFPWARPPGQGEVRALNARLPLNTDAYLSLQELQDQDPTHLV</sequence>
<reference key="1">
    <citation type="submission" date="2005-09" db="EMBL/GenBank/DDBJ databases">
        <authorList>
            <person name="Chen S."/>
            <person name="Yu L."/>
        </authorList>
    </citation>
    <scope>NUCLEOTIDE SEQUENCE [MRNA]</scope>
</reference>
<gene>
    <name type="primary">IL2RB</name>
</gene>
<accession>Q38J85</accession>